<protein>
    <recommendedName>
        <fullName evidence="1">RNA 2',3'-cyclic phosphodiesterase</fullName>
        <shortName evidence="1">RNA 2',3'-CPDase</shortName>
        <ecNumber evidence="1">3.1.4.58</ecNumber>
    </recommendedName>
</protein>
<accession>O28125</accession>
<evidence type="ECO:0000255" key="1">
    <source>
        <dbReference type="HAMAP-Rule" id="MF_01940"/>
    </source>
</evidence>
<feature type="chain" id="PRO_0000138962" description="RNA 2',3'-cyclic phosphodiesterase">
    <location>
        <begin position="1"/>
        <end position="176"/>
    </location>
</feature>
<feature type="short sequence motif" description="HXTX 1" evidence="1">
    <location>
        <begin position="39"/>
        <end position="42"/>
    </location>
</feature>
<feature type="short sequence motif" description="HXTX 2" evidence="1">
    <location>
        <begin position="122"/>
        <end position="125"/>
    </location>
</feature>
<feature type="active site" description="Proton donor" evidence="1">
    <location>
        <position position="39"/>
    </location>
</feature>
<feature type="active site" description="Proton acceptor" evidence="1">
    <location>
        <position position="122"/>
    </location>
</feature>
<proteinExistence type="inferred from homology"/>
<name>THPR_ARCFU</name>
<gene>
    <name type="ordered locus">AF_2157</name>
</gene>
<organism>
    <name type="scientific">Archaeoglobus fulgidus (strain ATCC 49558 / DSM 4304 / JCM 9628 / NBRC 100126 / VC-16)</name>
    <dbReference type="NCBI Taxonomy" id="224325"/>
    <lineage>
        <taxon>Archaea</taxon>
        <taxon>Methanobacteriati</taxon>
        <taxon>Methanobacteriota</taxon>
        <taxon>Archaeoglobi</taxon>
        <taxon>Archaeoglobales</taxon>
        <taxon>Archaeoglobaceae</taxon>
        <taxon>Archaeoglobus</taxon>
    </lineage>
</organism>
<dbReference type="EC" id="3.1.4.58" evidence="1"/>
<dbReference type="EMBL" id="AE000782">
    <property type="protein sequence ID" value="AAB89083.1"/>
    <property type="molecule type" value="Genomic_DNA"/>
</dbReference>
<dbReference type="PIR" id="E69519">
    <property type="entry name" value="E69519"/>
</dbReference>
<dbReference type="SMR" id="O28125"/>
<dbReference type="STRING" id="224325.AF_2157"/>
<dbReference type="PaxDb" id="224325-AF_2157"/>
<dbReference type="EnsemblBacteria" id="AAB89083">
    <property type="protein sequence ID" value="AAB89083"/>
    <property type="gene ID" value="AF_2157"/>
</dbReference>
<dbReference type="KEGG" id="afu:AF_2157"/>
<dbReference type="eggNOG" id="arCOG01736">
    <property type="taxonomic scope" value="Archaea"/>
</dbReference>
<dbReference type="HOGENOM" id="CLU_081251_3_4_2"/>
<dbReference type="OrthoDB" id="44091at2157"/>
<dbReference type="PhylomeDB" id="O28125"/>
<dbReference type="Proteomes" id="UP000002199">
    <property type="component" value="Chromosome"/>
</dbReference>
<dbReference type="GO" id="GO:0004113">
    <property type="term" value="F:2',3'-cyclic-nucleotide 3'-phosphodiesterase activity"/>
    <property type="evidence" value="ECO:0007669"/>
    <property type="project" value="InterPro"/>
</dbReference>
<dbReference type="GO" id="GO:0008664">
    <property type="term" value="F:RNA 2',3'-cyclic 3'-phosphodiesterase activity"/>
    <property type="evidence" value="ECO:0007669"/>
    <property type="project" value="UniProtKB-EC"/>
</dbReference>
<dbReference type="Gene3D" id="3.90.1140.10">
    <property type="entry name" value="Cyclic phosphodiesterase"/>
    <property type="match status" value="1"/>
</dbReference>
<dbReference type="HAMAP" id="MF_01940">
    <property type="entry name" value="RNA_CPDase"/>
    <property type="match status" value="1"/>
</dbReference>
<dbReference type="InterPro" id="IPR009097">
    <property type="entry name" value="Cyclic_Pdiesterase"/>
</dbReference>
<dbReference type="InterPro" id="IPR014051">
    <property type="entry name" value="Phosphoesterase_HXTX"/>
</dbReference>
<dbReference type="InterPro" id="IPR004175">
    <property type="entry name" value="RNA_CPDase"/>
</dbReference>
<dbReference type="NCBIfam" id="TIGR02258">
    <property type="entry name" value="2_5_ligase"/>
    <property type="match status" value="1"/>
</dbReference>
<dbReference type="PANTHER" id="PTHR35561">
    <property type="entry name" value="RNA 2',3'-CYCLIC PHOSPHODIESTERASE"/>
    <property type="match status" value="1"/>
</dbReference>
<dbReference type="PANTHER" id="PTHR35561:SF1">
    <property type="entry name" value="RNA 2',3'-CYCLIC PHOSPHODIESTERASE"/>
    <property type="match status" value="1"/>
</dbReference>
<dbReference type="Pfam" id="PF02834">
    <property type="entry name" value="LigT_PEase"/>
    <property type="match status" value="2"/>
</dbReference>
<dbReference type="SUPFAM" id="SSF55144">
    <property type="entry name" value="LigT-like"/>
    <property type="match status" value="1"/>
</dbReference>
<comment type="function">
    <text evidence="1">Hydrolyzes RNA 2',3'-cyclic phosphodiester to an RNA 2'-phosphomonoester.</text>
</comment>
<comment type="catalytic activity">
    <reaction evidence="1">
        <text>a 3'-end 2',3'-cyclophospho-ribonucleotide-RNA + H2O = a 3'-end 2'-phospho-ribonucleotide-RNA + H(+)</text>
        <dbReference type="Rhea" id="RHEA:11828"/>
        <dbReference type="Rhea" id="RHEA-COMP:10464"/>
        <dbReference type="Rhea" id="RHEA-COMP:17353"/>
        <dbReference type="ChEBI" id="CHEBI:15377"/>
        <dbReference type="ChEBI" id="CHEBI:15378"/>
        <dbReference type="ChEBI" id="CHEBI:83064"/>
        <dbReference type="ChEBI" id="CHEBI:173113"/>
        <dbReference type="EC" id="3.1.4.58"/>
    </reaction>
</comment>
<comment type="similarity">
    <text evidence="1">Belongs to the 2H phosphoesterase superfamily. ThpR family.</text>
</comment>
<sequence length="176" mass="20060">MRLFVAVDVDDSIREKVKPILKELSGVSGVKAVEPENLHITLLFLGEVGEEKLARIEERLSEVTFQPFKISFEGVGAFPNPGSPRVVWIGVKEEGELTRLANSVYEKLKKLGFRRDKDFKAHLTVGRVKRKNPEVADIVRKYSSESFGEMEVRDFRLKQSILTPKGPIYKDLRVFE</sequence>
<reference key="1">
    <citation type="journal article" date="1997" name="Nature">
        <title>The complete genome sequence of the hyperthermophilic, sulphate-reducing archaeon Archaeoglobus fulgidus.</title>
        <authorList>
            <person name="Klenk H.-P."/>
            <person name="Clayton R.A."/>
            <person name="Tomb J.-F."/>
            <person name="White O."/>
            <person name="Nelson K.E."/>
            <person name="Ketchum K.A."/>
            <person name="Dodson R.J."/>
            <person name="Gwinn M.L."/>
            <person name="Hickey E.K."/>
            <person name="Peterson J.D."/>
            <person name="Richardson D.L."/>
            <person name="Kerlavage A.R."/>
            <person name="Graham D.E."/>
            <person name="Kyrpides N.C."/>
            <person name="Fleischmann R.D."/>
            <person name="Quackenbush J."/>
            <person name="Lee N.H."/>
            <person name="Sutton G.G."/>
            <person name="Gill S.R."/>
            <person name="Kirkness E.F."/>
            <person name="Dougherty B.A."/>
            <person name="McKenney K."/>
            <person name="Adams M.D."/>
            <person name="Loftus B.J."/>
            <person name="Peterson S.N."/>
            <person name="Reich C.I."/>
            <person name="McNeil L.K."/>
            <person name="Badger J.H."/>
            <person name="Glodek A."/>
            <person name="Zhou L."/>
            <person name="Overbeek R."/>
            <person name="Gocayne J.D."/>
            <person name="Weidman J.F."/>
            <person name="McDonald L.A."/>
            <person name="Utterback T.R."/>
            <person name="Cotton M.D."/>
            <person name="Spriggs T."/>
            <person name="Artiach P."/>
            <person name="Kaine B.P."/>
            <person name="Sykes S.M."/>
            <person name="Sadow P.W."/>
            <person name="D'Andrea K.P."/>
            <person name="Bowman C."/>
            <person name="Fujii C."/>
            <person name="Garland S.A."/>
            <person name="Mason T.M."/>
            <person name="Olsen G.J."/>
            <person name="Fraser C.M."/>
            <person name="Smith H.O."/>
            <person name="Woese C.R."/>
            <person name="Venter J.C."/>
        </authorList>
    </citation>
    <scope>NUCLEOTIDE SEQUENCE [LARGE SCALE GENOMIC DNA]</scope>
    <source>
        <strain>ATCC 49558 / DSM 4304 / JCM 9628 / NBRC 100126 / VC-16</strain>
    </source>
</reference>
<keyword id="KW-0378">Hydrolase</keyword>
<keyword id="KW-1185">Reference proteome</keyword>